<protein>
    <recommendedName>
        <fullName evidence="1">Triosephosphate isomerase</fullName>
        <shortName evidence="1">TIM</shortName>
        <shortName evidence="1">TPI</shortName>
        <ecNumber evidence="1">5.3.1.1</ecNumber>
    </recommendedName>
    <alternativeName>
        <fullName evidence="1">Triose-phosphate isomerase</fullName>
    </alternativeName>
</protein>
<accession>A6WRH2</accession>
<gene>
    <name evidence="1" type="primary">tpiA</name>
    <name type="ordered locus">Shew185_3284</name>
</gene>
<reference key="1">
    <citation type="submission" date="2007-07" db="EMBL/GenBank/DDBJ databases">
        <title>Complete sequence of chromosome of Shewanella baltica OS185.</title>
        <authorList>
            <consortium name="US DOE Joint Genome Institute"/>
            <person name="Copeland A."/>
            <person name="Lucas S."/>
            <person name="Lapidus A."/>
            <person name="Barry K."/>
            <person name="Glavina del Rio T."/>
            <person name="Dalin E."/>
            <person name="Tice H."/>
            <person name="Pitluck S."/>
            <person name="Sims D."/>
            <person name="Brettin T."/>
            <person name="Bruce D."/>
            <person name="Detter J.C."/>
            <person name="Han C."/>
            <person name="Schmutz J."/>
            <person name="Larimer F."/>
            <person name="Land M."/>
            <person name="Hauser L."/>
            <person name="Kyrpides N."/>
            <person name="Mikhailova N."/>
            <person name="Brettar I."/>
            <person name="Rodrigues J."/>
            <person name="Konstantinidis K."/>
            <person name="Tiedje J."/>
            <person name="Richardson P."/>
        </authorList>
    </citation>
    <scope>NUCLEOTIDE SEQUENCE [LARGE SCALE GENOMIC DNA]</scope>
    <source>
        <strain>OS185</strain>
    </source>
</reference>
<proteinExistence type="inferred from homology"/>
<keyword id="KW-0963">Cytoplasm</keyword>
<keyword id="KW-0312">Gluconeogenesis</keyword>
<keyword id="KW-0324">Glycolysis</keyword>
<keyword id="KW-0413">Isomerase</keyword>
<dbReference type="EC" id="5.3.1.1" evidence="1"/>
<dbReference type="EMBL" id="CP000753">
    <property type="protein sequence ID" value="ABS09411.1"/>
    <property type="molecule type" value="Genomic_DNA"/>
</dbReference>
<dbReference type="RefSeq" id="WP_006082720.1">
    <property type="nucleotide sequence ID" value="NC_009665.1"/>
</dbReference>
<dbReference type="SMR" id="A6WRH2"/>
<dbReference type="GeneID" id="67444453"/>
<dbReference type="KEGG" id="sbm:Shew185_3284"/>
<dbReference type="HOGENOM" id="CLU_024251_2_1_6"/>
<dbReference type="UniPathway" id="UPA00109">
    <property type="reaction ID" value="UER00189"/>
</dbReference>
<dbReference type="UniPathway" id="UPA00138"/>
<dbReference type="GO" id="GO:0005829">
    <property type="term" value="C:cytosol"/>
    <property type="evidence" value="ECO:0007669"/>
    <property type="project" value="TreeGrafter"/>
</dbReference>
<dbReference type="GO" id="GO:0004807">
    <property type="term" value="F:triose-phosphate isomerase activity"/>
    <property type="evidence" value="ECO:0007669"/>
    <property type="project" value="UniProtKB-UniRule"/>
</dbReference>
<dbReference type="GO" id="GO:0006094">
    <property type="term" value="P:gluconeogenesis"/>
    <property type="evidence" value="ECO:0007669"/>
    <property type="project" value="UniProtKB-UniRule"/>
</dbReference>
<dbReference type="GO" id="GO:0046166">
    <property type="term" value="P:glyceraldehyde-3-phosphate biosynthetic process"/>
    <property type="evidence" value="ECO:0007669"/>
    <property type="project" value="TreeGrafter"/>
</dbReference>
<dbReference type="GO" id="GO:0019563">
    <property type="term" value="P:glycerol catabolic process"/>
    <property type="evidence" value="ECO:0007669"/>
    <property type="project" value="TreeGrafter"/>
</dbReference>
<dbReference type="GO" id="GO:0006096">
    <property type="term" value="P:glycolytic process"/>
    <property type="evidence" value="ECO:0007669"/>
    <property type="project" value="UniProtKB-UniRule"/>
</dbReference>
<dbReference type="CDD" id="cd00311">
    <property type="entry name" value="TIM"/>
    <property type="match status" value="1"/>
</dbReference>
<dbReference type="FunFam" id="3.20.20.70:FF:000016">
    <property type="entry name" value="Triosephosphate isomerase"/>
    <property type="match status" value="1"/>
</dbReference>
<dbReference type="Gene3D" id="3.20.20.70">
    <property type="entry name" value="Aldolase class I"/>
    <property type="match status" value="1"/>
</dbReference>
<dbReference type="HAMAP" id="MF_00147_B">
    <property type="entry name" value="TIM_B"/>
    <property type="match status" value="1"/>
</dbReference>
<dbReference type="InterPro" id="IPR013785">
    <property type="entry name" value="Aldolase_TIM"/>
</dbReference>
<dbReference type="InterPro" id="IPR035990">
    <property type="entry name" value="TIM_sf"/>
</dbReference>
<dbReference type="InterPro" id="IPR022896">
    <property type="entry name" value="TrioseP_Isoase_bac/euk"/>
</dbReference>
<dbReference type="InterPro" id="IPR000652">
    <property type="entry name" value="Triosephosphate_isomerase"/>
</dbReference>
<dbReference type="InterPro" id="IPR020861">
    <property type="entry name" value="Triosephosphate_isomerase_AS"/>
</dbReference>
<dbReference type="NCBIfam" id="TIGR00419">
    <property type="entry name" value="tim"/>
    <property type="match status" value="1"/>
</dbReference>
<dbReference type="PANTHER" id="PTHR21139">
    <property type="entry name" value="TRIOSEPHOSPHATE ISOMERASE"/>
    <property type="match status" value="1"/>
</dbReference>
<dbReference type="PANTHER" id="PTHR21139:SF42">
    <property type="entry name" value="TRIOSEPHOSPHATE ISOMERASE"/>
    <property type="match status" value="1"/>
</dbReference>
<dbReference type="Pfam" id="PF00121">
    <property type="entry name" value="TIM"/>
    <property type="match status" value="1"/>
</dbReference>
<dbReference type="SUPFAM" id="SSF51351">
    <property type="entry name" value="Triosephosphate isomerase (TIM)"/>
    <property type="match status" value="1"/>
</dbReference>
<dbReference type="PROSITE" id="PS00171">
    <property type="entry name" value="TIM_1"/>
    <property type="match status" value="1"/>
</dbReference>
<dbReference type="PROSITE" id="PS51440">
    <property type="entry name" value="TIM_2"/>
    <property type="match status" value="1"/>
</dbReference>
<sequence length="260" mass="28043">MALRRPMVAGNWKMNGSAALAQELFKKFASKLQNDSAEVVLCPPSIYLESVRQLLEANKEALDGSLVRMGAQNLSQHDFGAYTGEVSGQMLKDSGCRYVIIGHSERRRMYGETSNIVAEKFAAAQKHGLTPILCVGESGPAREARRTFEVIAEELDIVIQKNGTMAFDNAIIAYEPLWAVGTGKSATPEQAQEVHAFIRKRLSEVSPFIGENIRILYGGSVTPSNAADLFAQPDVDGGLIGGASLNSSEFLSLCTIAMSA</sequence>
<name>TPIS_SHEB8</name>
<evidence type="ECO:0000255" key="1">
    <source>
        <dbReference type="HAMAP-Rule" id="MF_00147"/>
    </source>
</evidence>
<comment type="function">
    <text evidence="1">Involved in the gluconeogenesis. Catalyzes stereospecifically the conversion of dihydroxyacetone phosphate (DHAP) to D-glyceraldehyde-3-phosphate (G3P).</text>
</comment>
<comment type="catalytic activity">
    <reaction evidence="1">
        <text>D-glyceraldehyde 3-phosphate = dihydroxyacetone phosphate</text>
        <dbReference type="Rhea" id="RHEA:18585"/>
        <dbReference type="ChEBI" id="CHEBI:57642"/>
        <dbReference type="ChEBI" id="CHEBI:59776"/>
        <dbReference type="EC" id="5.3.1.1"/>
    </reaction>
</comment>
<comment type="pathway">
    <text evidence="1">Carbohydrate biosynthesis; gluconeogenesis.</text>
</comment>
<comment type="pathway">
    <text evidence="1">Carbohydrate degradation; glycolysis; D-glyceraldehyde 3-phosphate from glycerone phosphate: step 1/1.</text>
</comment>
<comment type="subunit">
    <text evidence="1">Homodimer.</text>
</comment>
<comment type="subcellular location">
    <subcellularLocation>
        <location evidence="1">Cytoplasm</location>
    </subcellularLocation>
</comment>
<comment type="similarity">
    <text evidence="1">Belongs to the triosephosphate isomerase family.</text>
</comment>
<feature type="chain" id="PRO_1000009856" description="Triosephosphate isomerase">
    <location>
        <begin position="1"/>
        <end position="260"/>
    </location>
</feature>
<feature type="active site" description="Electrophile" evidence="1">
    <location>
        <position position="103"/>
    </location>
</feature>
<feature type="active site" description="Proton acceptor" evidence="1">
    <location>
        <position position="175"/>
    </location>
</feature>
<feature type="binding site" evidence="1">
    <location>
        <begin position="11"/>
        <end position="13"/>
    </location>
    <ligand>
        <name>substrate</name>
    </ligand>
</feature>
<feature type="binding site" evidence="1">
    <location>
        <position position="181"/>
    </location>
    <ligand>
        <name>substrate</name>
    </ligand>
</feature>
<feature type="binding site" evidence="1">
    <location>
        <position position="220"/>
    </location>
    <ligand>
        <name>substrate</name>
    </ligand>
</feature>
<feature type="binding site" evidence="1">
    <location>
        <begin position="241"/>
        <end position="242"/>
    </location>
    <ligand>
        <name>substrate</name>
    </ligand>
</feature>
<organism>
    <name type="scientific">Shewanella baltica (strain OS185)</name>
    <dbReference type="NCBI Taxonomy" id="402882"/>
    <lineage>
        <taxon>Bacteria</taxon>
        <taxon>Pseudomonadati</taxon>
        <taxon>Pseudomonadota</taxon>
        <taxon>Gammaproteobacteria</taxon>
        <taxon>Alteromonadales</taxon>
        <taxon>Shewanellaceae</taxon>
        <taxon>Shewanella</taxon>
    </lineage>
</organism>